<proteinExistence type="inferred from homology"/>
<keyword id="KW-0004">4Fe-4S</keyword>
<keyword id="KW-0408">Iron</keyword>
<keyword id="KW-0411">Iron-sulfur</keyword>
<keyword id="KW-0479">Metal-binding</keyword>
<keyword id="KW-1185">Reference proteome</keyword>
<protein>
    <recommendedName>
        <fullName evidence="1">Fe/S biogenesis protein NfuA</fullName>
    </recommendedName>
</protein>
<evidence type="ECO:0000255" key="1">
    <source>
        <dbReference type="HAMAP-Rule" id="MF_01637"/>
    </source>
</evidence>
<comment type="function">
    <text evidence="1">Involved in iron-sulfur cluster biogenesis. Binds a 4Fe-4S cluster, can transfer this cluster to apoproteins, and thereby intervenes in the maturation of Fe/S proteins. Could also act as a scaffold/chaperone for damaged Fe/S proteins.</text>
</comment>
<comment type="cofactor">
    <cofactor evidence="1">
        <name>[4Fe-4S] cluster</name>
        <dbReference type="ChEBI" id="CHEBI:49883"/>
    </cofactor>
    <text evidence="1">Binds 1 [4Fe-4S] cluster per subunit. The cluster is presumably bound at the interface of two monomers.</text>
</comment>
<comment type="subunit">
    <text evidence="1">Homodimer.</text>
</comment>
<comment type="similarity">
    <text evidence="1">Belongs to the NfuA family.</text>
</comment>
<reference key="1">
    <citation type="submission" date="2006-12" db="EMBL/GenBank/DDBJ databases">
        <title>Complete sequence of Shewanella amazonensis SB2B.</title>
        <authorList>
            <consortium name="US DOE Joint Genome Institute"/>
            <person name="Copeland A."/>
            <person name="Lucas S."/>
            <person name="Lapidus A."/>
            <person name="Barry K."/>
            <person name="Detter J.C."/>
            <person name="Glavina del Rio T."/>
            <person name="Hammon N."/>
            <person name="Israni S."/>
            <person name="Dalin E."/>
            <person name="Tice H."/>
            <person name="Pitluck S."/>
            <person name="Munk A.C."/>
            <person name="Brettin T."/>
            <person name="Bruce D."/>
            <person name="Han C."/>
            <person name="Tapia R."/>
            <person name="Gilna P."/>
            <person name="Schmutz J."/>
            <person name="Larimer F."/>
            <person name="Land M."/>
            <person name="Hauser L."/>
            <person name="Kyrpides N."/>
            <person name="Mikhailova N."/>
            <person name="Fredrickson J."/>
            <person name="Richardson P."/>
        </authorList>
    </citation>
    <scope>NUCLEOTIDE SEQUENCE [LARGE SCALE GENOMIC DNA]</scope>
    <source>
        <strain>ATCC BAA-1098 / SB2B</strain>
    </source>
</reference>
<feature type="chain" id="PRO_0000292091" description="Fe/S biogenesis protein NfuA">
    <location>
        <begin position="1"/>
        <end position="192"/>
    </location>
</feature>
<feature type="binding site" evidence="1">
    <location>
        <position position="149"/>
    </location>
    <ligand>
        <name>[4Fe-4S] cluster</name>
        <dbReference type="ChEBI" id="CHEBI:49883"/>
    </ligand>
</feature>
<feature type="binding site" evidence="1">
    <location>
        <position position="152"/>
    </location>
    <ligand>
        <name>[4Fe-4S] cluster</name>
        <dbReference type="ChEBI" id="CHEBI:49883"/>
    </ligand>
</feature>
<name>NFUA_SHEAM</name>
<gene>
    <name evidence="1" type="primary">nfuA</name>
    <name type="ordered locus">Sama_3502</name>
</gene>
<sequence length="192" mass="20650">MITISEAAQAHFVKLLADQPEGTNIRVFVISPGTAQAECGVSYCPPDAVEDDDIELEFNGFNAMVDEKSAPFLEDASIDLVTDQLGSQLTLKAPNAKMRKVSADASLVERIEYVIQAEINPQLASHGGNILLVEVTDDGVAVIQFGGGCNGCSMVDVTLKDGIEKQLLDMFPGELTEVRDATEHQHGSHSYQ</sequence>
<dbReference type="EMBL" id="CP000507">
    <property type="protein sequence ID" value="ABM01705.1"/>
    <property type="molecule type" value="Genomic_DNA"/>
</dbReference>
<dbReference type="RefSeq" id="WP_011761608.1">
    <property type="nucleotide sequence ID" value="NC_008700.1"/>
</dbReference>
<dbReference type="SMR" id="A1SBE8"/>
<dbReference type="STRING" id="326297.Sama_3502"/>
<dbReference type="KEGG" id="saz:Sama_3502"/>
<dbReference type="eggNOG" id="COG0316">
    <property type="taxonomic scope" value="Bacteria"/>
</dbReference>
<dbReference type="eggNOG" id="COG0694">
    <property type="taxonomic scope" value="Bacteria"/>
</dbReference>
<dbReference type="HOGENOM" id="CLU_094569_0_0_6"/>
<dbReference type="OrthoDB" id="9785450at2"/>
<dbReference type="Proteomes" id="UP000009175">
    <property type="component" value="Chromosome"/>
</dbReference>
<dbReference type="GO" id="GO:0051539">
    <property type="term" value="F:4 iron, 4 sulfur cluster binding"/>
    <property type="evidence" value="ECO:0007669"/>
    <property type="project" value="UniProtKB-UniRule"/>
</dbReference>
<dbReference type="GO" id="GO:0005506">
    <property type="term" value="F:iron ion binding"/>
    <property type="evidence" value="ECO:0007669"/>
    <property type="project" value="InterPro"/>
</dbReference>
<dbReference type="GO" id="GO:0016226">
    <property type="term" value="P:iron-sulfur cluster assembly"/>
    <property type="evidence" value="ECO:0007669"/>
    <property type="project" value="UniProtKB-UniRule"/>
</dbReference>
<dbReference type="GO" id="GO:0051604">
    <property type="term" value="P:protein maturation"/>
    <property type="evidence" value="ECO:0007669"/>
    <property type="project" value="UniProtKB-UniRule"/>
</dbReference>
<dbReference type="Gene3D" id="3.30.300.130">
    <property type="entry name" value="Fe-S cluster assembly (FSCA)"/>
    <property type="match status" value="1"/>
</dbReference>
<dbReference type="Gene3D" id="2.60.300.12">
    <property type="entry name" value="HesB-like domain"/>
    <property type="match status" value="1"/>
</dbReference>
<dbReference type="HAMAP" id="MF_01637">
    <property type="entry name" value="Fe_S_biogen_NfuA"/>
    <property type="match status" value="1"/>
</dbReference>
<dbReference type="InterPro" id="IPR017726">
    <property type="entry name" value="Fe/S_biogenesis_protein_NfuA"/>
</dbReference>
<dbReference type="InterPro" id="IPR000361">
    <property type="entry name" value="FeS_biogenesis"/>
</dbReference>
<dbReference type="InterPro" id="IPR034904">
    <property type="entry name" value="FSCA_dom_sf"/>
</dbReference>
<dbReference type="InterPro" id="IPR035903">
    <property type="entry name" value="HesB-like_dom_sf"/>
</dbReference>
<dbReference type="InterPro" id="IPR001075">
    <property type="entry name" value="NIF_FeS_clus_asmbl_NifU_C"/>
</dbReference>
<dbReference type="NCBIfam" id="NF008392">
    <property type="entry name" value="PRK11190.1"/>
    <property type="match status" value="1"/>
</dbReference>
<dbReference type="NCBIfam" id="TIGR03341">
    <property type="entry name" value="YhgI_GntY"/>
    <property type="match status" value="1"/>
</dbReference>
<dbReference type="PANTHER" id="PTHR11178:SF51">
    <property type="entry name" value="FE_S BIOGENESIS PROTEIN NFUA"/>
    <property type="match status" value="1"/>
</dbReference>
<dbReference type="PANTHER" id="PTHR11178">
    <property type="entry name" value="IRON-SULFUR CLUSTER SCAFFOLD PROTEIN NFU-RELATED"/>
    <property type="match status" value="1"/>
</dbReference>
<dbReference type="Pfam" id="PF01521">
    <property type="entry name" value="Fe-S_biosyn"/>
    <property type="match status" value="1"/>
</dbReference>
<dbReference type="Pfam" id="PF01106">
    <property type="entry name" value="NifU"/>
    <property type="match status" value="1"/>
</dbReference>
<dbReference type="SUPFAM" id="SSF117916">
    <property type="entry name" value="Fe-S cluster assembly (FSCA) domain-like"/>
    <property type="match status" value="1"/>
</dbReference>
<dbReference type="SUPFAM" id="SSF89360">
    <property type="entry name" value="HesB-like domain"/>
    <property type="match status" value="1"/>
</dbReference>
<accession>A1SBE8</accession>
<organism>
    <name type="scientific">Shewanella amazonensis (strain ATCC BAA-1098 / SB2B)</name>
    <dbReference type="NCBI Taxonomy" id="326297"/>
    <lineage>
        <taxon>Bacteria</taxon>
        <taxon>Pseudomonadati</taxon>
        <taxon>Pseudomonadota</taxon>
        <taxon>Gammaproteobacteria</taxon>
        <taxon>Alteromonadales</taxon>
        <taxon>Shewanellaceae</taxon>
        <taxon>Shewanella</taxon>
    </lineage>
</organism>